<keyword id="KW-0002">3D-structure</keyword>
<keyword id="KW-0007">Acetylation</keyword>
<keyword id="KW-0597">Phosphoprotein</keyword>
<keyword id="KW-0647">Proteasome</keyword>
<keyword id="KW-1185">Reference proteome</keyword>
<keyword id="KW-0677">Repeat</keyword>
<comment type="function">
    <text evidence="2">Component of the 26S proteasome, a multiprotein complex involved in the ATP-dependent degradation of ubiquitinated proteins. This complex plays a key role in the maintenance of protein homeostasis by removing misfolded or damaged proteins, which could impair cellular functions, and by removing proteins whose functions are no longer required. Therefore, the proteasome participates in numerous cellular processes, including cell cycle progression, apoptosis, or DNA damage repair.</text>
</comment>
<comment type="subunit">
    <text evidence="2">Component of the 19S proteasome regulatory particle complex. The 26S proteasome consists of a 20S core particle (CP) and two 19S regulatory subunits (RP). The regulatory particle is made of a lid composed of 9 subunits, a base containing 6 ATPases and few additional components including PSMD1. Interacts with ADRM1. Interacts with ZFAND1 (By similarity).</text>
</comment>
<comment type="similarity">
    <text evidence="4">Belongs to the proteasome subunit S1 family.</text>
</comment>
<protein>
    <recommendedName>
        <fullName>26S proteasome non-ATPase regulatory subunit 1</fullName>
    </recommendedName>
    <alternativeName>
        <fullName>26S proteasome regulatory subunit RPN2</fullName>
    </alternativeName>
    <alternativeName>
        <fullName>26S proteasome regulatory subunit S1</fullName>
    </alternativeName>
    <alternativeName>
        <fullName>26S proteasome subunit p112</fullName>
    </alternativeName>
</protein>
<feature type="chain" id="PRO_0000173802" description="26S proteasome non-ATPase regulatory subunit 1">
    <location>
        <begin position="1"/>
        <end position="953"/>
    </location>
</feature>
<feature type="repeat" description="PC 1">
    <location>
        <begin position="403"/>
        <end position="436"/>
    </location>
</feature>
<feature type="repeat" description="PC 2">
    <location>
        <begin position="441"/>
        <end position="474"/>
    </location>
</feature>
<feature type="repeat" description="PC 3">
    <location>
        <begin position="476"/>
        <end position="510"/>
    </location>
</feature>
<feature type="repeat" description="PC 4">
    <location>
        <begin position="511"/>
        <end position="545"/>
    </location>
</feature>
<feature type="repeat" description="PC 5">
    <location>
        <begin position="547"/>
        <end position="580"/>
    </location>
</feature>
<feature type="repeat" description="PC 6">
    <location>
        <begin position="581"/>
        <end position="616"/>
    </location>
</feature>
<feature type="repeat" description="PC 7">
    <location>
        <begin position="617"/>
        <end position="649"/>
    </location>
</feature>
<feature type="repeat" description="PC 8">
    <location>
        <begin position="651"/>
        <end position="685"/>
    </location>
</feature>
<feature type="repeat" description="PC 9">
    <location>
        <begin position="686"/>
        <end position="726"/>
    </location>
</feature>
<feature type="repeat" description="PC 10">
    <location>
        <begin position="729"/>
        <end position="761"/>
    </location>
</feature>
<feature type="region of interest" description="Disordered" evidence="3">
    <location>
        <begin position="277"/>
        <end position="319"/>
    </location>
</feature>
<feature type="region of interest" description="Disordered" evidence="3">
    <location>
        <begin position="839"/>
        <end position="881"/>
    </location>
</feature>
<feature type="region of interest" description="Disordered" evidence="3">
    <location>
        <begin position="930"/>
        <end position="953"/>
    </location>
</feature>
<feature type="compositionally biased region" description="Basic and acidic residues" evidence="3">
    <location>
        <begin position="290"/>
        <end position="303"/>
    </location>
</feature>
<feature type="compositionally biased region" description="Basic and acidic residues" evidence="3">
    <location>
        <begin position="842"/>
        <end position="852"/>
    </location>
</feature>
<feature type="compositionally biased region" description="Basic and acidic residues" evidence="3">
    <location>
        <begin position="859"/>
        <end position="872"/>
    </location>
</feature>
<feature type="compositionally biased region" description="Acidic residues" evidence="3">
    <location>
        <begin position="936"/>
        <end position="953"/>
    </location>
</feature>
<feature type="modified residue" description="N-acetylmethionine" evidence="2">
    <location>
        <position position="1"/>
    </location>
</feature>
<feature type="modified residue" description="Phosphothreonine" evidence="5">
    <location>
        <position position="273"/>
    </location>
</feature>
<feature type="modified residue" description="N6-acetyllysine" evidence="2">
    <location>
        <position position="310"/>
    </location>
</feature>
<feature type="modified residue" description="Phosphothreonine" evidence="5">
    <location>
        <position position="311"/>
    </location>
</feature>
<feature type="modified residue" description="Phosphoserine" evidence="5">
    <location>
        <position position="315"/>
    </location>
</feature>
<feature type="modified residue" description="N6-acetyllysine" evidence="1">
    <location>
        <position position="720"/>
    </location>
</feature>
<feature type="modified residue" description="Phosphothreonine" evidence="2">
    <location>
        <position position="830"/>
    </location>
</feature>
<feature type="modified residue" description="Phosphoserine" evidence="2">
    <location>
        <position position="834"/>
    </location>
</feature>
<proteinExistence type="evidence at protein level"/>
<name>PSMD1_RAT</name>
<gene>
    <name type="primary">Psmd1</name>
</gene>
<evidence type="ECO:0000250" key="1">
    <source>
        <dbReference type="UniProtKB" id="Q3TXS7"/>
    </source>
</evidence>
<evidence type="ECO:0000250" key="2">
    <source>
        <dbReference type="UniProtKB" id="Q99460"/>
    </source>
</evidence>
<evidence type="ECO:0000256" key="3">
    <source>
        <dbReference type="SAM" id="MobiDB-lite"/>
    </source>
</evidence>
<evidence type="ECO:0000305" key="4"/>
<evidence type="ECO:0007744" key="5">
    <source>
    </source>
</evidence>
<reference key="1">
    <citation type="submission" date="1998-05" db="EMBL/GenBank/DDBJ databases">
        <title>Proteasome involvement in quinolinic acid generated excitotoxicity: Evidence from differential RNA display.</title>
        <authorList>
            <person name="Seidel B."/>
            <person name="Jiang L."/>
            <person name="Reinheckel T."/>
            <person name="Keilhoff G."/>
            <person name="Schneider-Stock R."/>
            <person name="Wolf G."/>
        </authorList>
    </citation>
    <scope>NUCLEOTIDE SEQUENCE [MRNA]</scope>
    <source>
        <tissue>Brain</tissue>
    </source>
</reference>
<reference key="2">
    <citation type="journal article" date="2012" name="Nat. Commun.">
        <title>Quantitative maps of protein phosphorylation sites across 14 different rat organs and tissues.</title>
        <authorList>
            <person name="Lundby A."/>
            <person name="Secher A."/>
            <person name="Lage K."/>
            <person name="Nordsborg N.B."/>
            <person name="Dmytriyev A."/>
            <person name="Lundby C."/>
            <person name="Olsen J.V."/>
        </authorList>
    </citation>
    <scope>PHOSPHORYLATION [LARGE SCALE ANALYSIS] AT THR-273; THR-311 AND SER-315</scope>
    <scope>IDENTIFICATION BY MASS SPECTROMETRY [LARGE SCALE ANALYSIS]</scope>
</reference>
<accession>O88761</accession>
<organism>
    <name type="scientific">Rattus norvegicus</name>
    <name type="common">Rat</name>
    <dbReference type="NCBI Taxonomy" id="10116"/>
    <lineage>
        <taxon>Eukaryota</taxon>
        <taxon>Metazoa</taxon>
        <taxon>Chordata</taxon>
        <taxon>Craniata</taxon>
        <taxon>Vertebrata</taxon>
        <taxon>Euteleostomi</taxon>
        <taxon>Mammalia</taxon>
        <taxon>Eutheria</taxon>
        <taxon>Euarchontoglires</taxon>
        <taxon>Glires</taxon>
        <taxon>Rodentia</taxon>
        <taxon>Myomorpha</taxon>
        <taxon>Muroidea</taxon>
        <taxon>Muridae</taxon>
        <taxon>Murinae</taxon>
        <taxon>Rattus</taxon>
    </lineage>
</organism>
<dbReference type="EMBL" id="AJ006340">
    <property type="protein sequence ID" value="CAA06983.1"/>
    <property type="molecule type" value="mRNA"/>
</dbReference>
<dbReference type="RefSeq" id="NP_114184.1">
    <property type="nucleotide sequence ID" value="NM_031978.1"/>
</dbReference>
<dbReference type="PDB" id="6EPC">
    <property type="method" value="EM"/>
    <property type="resolution" value="12.30 A"/>
    <property type="chains" value="N=1-953"/>
</dbReference>
<dbReference type="PDB" id="6EPD">
    <property type="method" value="EM"/>
    <property type="resolution" value="15.40 A"/>
    <property type="chains" value="N=1-953"/>
</dbReference>
<dbReference type="PDB" id="6EPE">
    <property type="method" value="EM"/>
    <property type="resolution" value="12.80 A"/>
    <property type="chains" value="N=1-953"/>
</dbReference>
<dbReference type="PDB" id="6EPF">
    <property type="method" value="EM"/>
    <property type="resolution" value="11.80 A"/>
    <property type="chains" value="N=1-953"/>
</dbReference>
<dbReference type="PDBsum" id="6EPC"/>
<dbReference type="PDBsum" id="6EPD"/>
<dbReference type="PDBsum" id="6EPE"/>
<dbReference type="PDBsum" id="6EPF"/>
<dbReference type="EMDB" id="EMD-3913"/>
<dbReference type="EMDB" id="EMD-3914"/>
<dbReference type="EMDB" id="EMD-3915"/>
<dbReference type="EMDB" id="EMD-3916"/>
<dbReference type="SMR" id="O88761"/>
<dbReference type="BioGRID" id="249841">
    <property type="interactions" value="4"/>
</dbReference>
<dbReference type="ComplexPortal" id="CPX-8962">
    <property type="entry name" value="19S proteasome regulatory complex"/>
</dbReference>
<dbReference type="ComplexPortal" id="CPX-8965">
    <property type="entry name" value="30S proteasome complex"/>
</dbReference>
<dbReference type="FunCoup" id="O88761">
    <property type="interactions" value="3414"/>
</dbReference>
<dbReference type="IntAct" id="O88761">
    <property type="interactions" value="4"/>
</dbReference>
<dbReference type="STRING" id="10116.ENSRNOP00000024306"/>
<dbReference type="ChEMBL" id="CHEMBL2176782"/>
<dbReference type="iPTMnet" id="O88761"/>
<dbReference type="PhosphoSitePlus" id="O88761"/>
<dbReference type="jPOST" id="O88761"/>
<dbReference type="PaxDb" id="10116-ENSRNOP00000024306"/>
<dbReference type="GeneID" id="83806"/>
<dbReference type="KEGG" id="rno:83806"/>
<dbReference type="UCSC" id="RGD:621669">
    <property type="organism name" value="rat"/>
</dbReference>
<dbReference type="AGR" id="RGD:621669"/>
<dbReference type="CTD" id="5707"/>
<dbReference type="RGD" id="621669">
    <property type="gene designation" value="Psmd1"/>
</dbReference>
<dbReference type="eggNOG" id="KOG2062">
    <property type="taxonomic scope" value="Eukaryota"/>
</dbReference>
<dbReference type="InParanoid" id="O88761"/>
<dbReference type="PhylomeDB" id="O88761"/>
<dbReference type="Reactome" id="R-RNO-1169091">
    <property type="pathway name" value="Activation of NF-kappaB in B cells"/>
</dbReference>
<dbReference type="Reactome" id="R-RNO-1234176">
    <property type="pathway name" value="Oxygen-dependent proline hydroxylation of Hypoxia-inducible Factor Alpha"/>
</dbReference>
<dbReference type="Reactome" id="R-RNO-1236978">
    <property type="pathway name" value="Cross-presentation of soluble exogenous antigens (endosomes)"/>
</dbReference>
<dbReference type="Reactome" id="R-RNO-174084">
    <property type="pathway name" value="Autodegradation of Cdh1 by Cdh1:APC/C"/>
</dbReference>
<dbReference type="Reactome" id="R-RNO-174113">
    <property type="pathway name" value="SCF-beta-TrCP mediated degradation of Emi1"/>
</dbReference>
<dbReference type="Reactome" id="R-RNO-174154">
    <property type="pathway name" value="APC/C:Cdc20 mediated degradation of Securin"/>
</dbReference>
<dbReference type="Reactome" id="R-RNO-174178">
    <property type="pathway name" value="APC/C:Cdh1 mediated degradation of Cdc20 and other APC/C:Cdh1 targeted proteins in late mitosis/early G1"/>
</dbReference>
<dbReference type="Reactome" id="R-RNO-174184">
    <property type="pathway name" value="Cdc20:Phospho-APC/C mediated degradation of Cyclin A"/>
</dbReference>
<dbReference type="Reactome" id="R-RNO-187577">
    <property type="pathway name" value="SCF(Skp2)-mediated degradation of p27/p21"/>
</dbReference>
<dbReference type="Reactome" id="R-RNO-195253">
    <property type="pathway name" value="Degradation of beta-catenin by the destruction complex"/>
</dbReference>
<dbReference type="Reactome" id="R-RNO-2467813">
    <property type="pathway name" value="Separation of Sister Chromatids"/>
</dbReference>
<dbReference type="Reactome" id="R-RNO-349425">
    <property type="pathway name" value="Autodegradation of the E3 ubiquitin ligase COP1"/>
</dbReference>
<dbReference type="Reactome" id="R-RNO-350562">
    <property type="pathway name" value="Regulation of ornithine decarboxylase (ODC)"/>
</dbReference>
<dbReference type="Reactome" id="R-RNO-382556">
    <property type="pathway name" value="ABC-family proteins mediated transport"/>
</dbReference>
<dbReference type="Reactome" id="R-RNO-450408">
    <property type="pathway name" value="AUF1 (hnRNP D0) binds and destabilizes mRNA"/>
</dbReference>
<dbReference type="Reactome" id="R-RNO-4608870">
    <property type="pathway name" value="Asymmetric localization of PCP proteins"/>
</dbReference>
<dbReference type="Reactome" id="R-RNO-4641257">
    <property type="pathway name" value="Degradation of AXIN"/>
</dbReference>
<dbReference type="Reactome" id="R-RNO-4641258">
    <property type="pathway name" value="Degradation of DVL"/>
</dbReference>
<dbReference type="Reactome" id="R-RNO-5358346">
    <property type="pathway name" value="Hedgehog ligand biogenesis"/>
</dbReference>
<dbReference type="Reactome" id="R-RNO-5607761">
    <property type="pathway name" value="Dectin-1 mediated noncanonical NF-kB signaling"/>
</dbReference>
<dbReference type="Reactome" id="R-RNO-5610780">
    <property type="pathway name" value="Degradation of GLI1 by the proteasome"/>
</dbReference>
<dbReference type="Reactome" id="R-RNO-5610785">
    <property type="pathway name" value="GLI3 is processed to GLI3R by the proteasome"/>
</dbReference>
<dbReference type="Reactome" id="R-RNO-5632684">
    <property type="pathway name" value="Hedgehog 'on' state"/>
</dbReference>
<dbReference type="Reactome" id="R-RNO-5658442">
    <property type="pathway name" value="Regulation of RAS by GAPs"/>
</dbReference>
<dbReference type="Reactome" id="R-RNO-5668541">
    <property type="pathway name" value="TNFR2 non-canonical NF-kB pathway"/>
</dbReference>
<dbReference type="Reactome" id="R-RNO-5676590">
    <property type="pathway name" value="NIK--&gt;noncanonical NF-kB signaling"/>
</dbReference>
<dbReference type="Reactome" id="R-RNO-5687128">
    <property type="pathway name" value="MAPK6/MAPK4 signaling"/>
</dbReference>
<dbReference type="Reactome" id="R-RNO-5689603">
    <property type="pathway name" value="UCH proteinases"/>
</dbReference>
<dbReference type="Reactome" id="R-RNO-5689880">
    <property type="pathway name" value="Ub-specific processing proteases"/>
</dbReference>
<dbReference type="Reactome" id="R-RNO-6798695">
    <property type="pathway name" value="Neutrophil degranulation"/>
</dbReference>
<dbReference type="Reactome" id="R-RNO-68867">
    <property type="pathway name" value="Assembly of the pre-replicative complex"/>
</dbReference>
<dbReference type="Reactome" id="R-RNO-68949">
    <property type="pathway name" value="Orc1 removal from chromatin"/>
</dbReference>
<dbReference type="Reactome" id="R-RNO-69017">
    <property type="pathway name" value="CDK-mediated phosphorylation and removal of Cdc6"/>
</dbReference>
<dbReference type="Reactome" id="R-RNO-69481">
    <property type="pathway name" value="G2/M Checkpoints"/>
</dbReference>
<dbReference type="Reactome" id="R-RNO-69601">
    <property type="pathway name" value="Ubiquitin Mediated Degradation of Phosphorylated Cdc25A"/>
</dbReference>
<dbReference type="Reactome" id="R-RNO-75815">
    <property type="pathway name" value="Ubiquitin-dependent degradation of Cyclin D"/>
</dbReference>
<dbReference type="Reactome" id="R-RNO-8852276">
    <property type="pathway name" value="The role of GTSE1 in G2/M progression after G2 checkpoint"/>
</dbReference>
<dbReference type="Reactome" id="R-RNO-8854050">
    <property type="pathway name" value="FBXL7 down-regulates AURKA during mitotic entry and in early mitosis"/>
</dbReference>
<dbReference type="Reactome" id="R-RNO-8939236">
    <property type="pathway name" value="RUNX1 regulates transcription of genes involved in differentiation of HSCs"/>
</dbReference>
<dbReference type="Reactome" id="R-RNO-8941858">
    <property type="pathway name" value="Regulation of RUNX3 expression and activity"/>
</dbReference>
<dbReference type="Reactome" id="R-RNO-8948751">
    <property type="pathway name" value="Regulation of PTEN stability and activity"/>
</dbReference>
<dbReference type="Reactome" id="R-RNO-8951664">
    <property type="pathway name" value="Neddylation"/>
</dbReference>
<dbReference type="Reactome" id="R-RNO-9755511">
    <property type="pathway name" value="KEAP1-NFE2L2 pathway"/>
</dbReference>
<dbReference type="Reactome" id="R-RNO-9762114">
    <property type="pathway name" value="GSK3B and BTRC:CUL1-mediated-degradation of NFE2L2"/>
</dbReference>
<dbReference type="Reactome" id="R-RNO-983168">
    <property type="pathway name" value="Antigen processing: Ubiquitination &amp; Proteasome degradation"/>
</dbReference>
<dbReference type="Reactome" id="R-RNO-9907900">
    <property type="pathway name" value="Proteasome assembly"/>
</dbReference>
<dbReference type="PRO" id="PR:O88761"/>
<dbReference type="Proteomes" id="UP000002494">
    <property type="component" value="Unplaced"/>
</dbReference>
<dbReference type="GO" id="GO:0005634">
    <property type="term" value="C:nucleus"/>
    <property type="evidence" value="ECO:0000318"/>
    <property type="project" value="GO_Central"/>
</dbReference>
<dbReference type="GO" id="GO:0022624">
    <property type="term" value="C:proteasome accessory complex"/>
    <property type="evidence" value="ECO:0000250"/>
    <property type="project" value="UniProtKB"/>
</dbReference>
<dbReference type="GO" id="GO:0000502">
    <property type="term" value="C:proteasome complex"/>
    <property type="evidence" value="ECO:0000266"/>
    <property type="project" value="RGD"/>
</dbReference>
<dbReference type="GO" id="GO:0008540">
    <property type="term" value="C:proteasome regulatory particle, base subcomplex"/>
    <property type="evidence" value="ECO:0000318"/>
    <property type="project" value="GO_Central"/>
</dbReference>
<dbReference type="GO" id="GO:0034515">
    <property type="term" value="C:proteasome storage granule"/>
    <property type="evidence" value="ECO:0000318"/>
    <property type="project" value="GO_Central"/>
</dbReference>
<dbReference type="GO" id="GO:0030234">
    <property type="term" value="F:enzyme regulator activity"/>
    <property type="evidence" value="ECO:0007669"/>
    <property type="project" value="InterPro"/>
</dbReference>
<dbReference type="GO" id="GO:0031625">
    <property type="term" value="F:ubiquitin protein ligase binding"/>
    <property type="evidence" value="ECO:0000266"/>
    <property type="project" value="RGD"/>
</dbReference>
<dbReference type="GO" id="GO:0043161">
    <property type="term" value="P:proteasome-mediated ubiquitin-dependent protein catabolic process"/>
    <property type="evidence" value="ECO:0000318"/>
    <property type="project" value="GO_Central"/>
</dbReference>
<dbReference type="GO" id="GO:0042176">
    <property type="term" value="P:regulation of protein catabolic process"/>
    <property type="evidence" value="ECO:0007669"/>
    <property type="project" value="InterPro"/>
</dbReference>
<dbReference type="FunFam" id="1.25.10.10:FF:000017">
    <property type="entry name" value="26S proteasome non-ATPase regulatory subunit 1"/>
    <property type="match status" value="1"/>
</dbReference>
<dbReference type="Gene3D" id="1.25.10.10">
    <property type="entry name" value="Leucine-rich Repeat Variant"/>
    <property type="match status" value="1"/>
</dbReference>
<dbReference type="InterPro" id="IPR016642">
    <property type="entry name" value="26S_Psome_Rpn2"/>
</dbReference>
<dbReference type="InterPro" id="IPR011989">
    <property type="entry name" value="ARM-like"/>
</dbReference>
<dbReference type="InterPro" id="IPR016024">
    <property type="entry name" value="ARM-type_fold"/>
</dbReference>
<dbReference type="InterPro" id="IPR002015">
    <property type="entry name" value="Proteasome/cyclosome_rpt"/>
</dbReference>
<dbReference type="InterPro" id="IPR048570">
    <property type="entry name" value="PSMD1_RPN2_N"/>
</dbReference>
<dbReference type="InterPro" id="IPR040623">
    <property type="entry name" value="RPN2_C"/>
</dbReference>
<dbReference type="PANTHER" id="PTHR10943">
    <property type="entry name" value="26S PROTEASOME NON-ATPASE REGULATORY SUBUNIT"/>
    <property type="match status" value="1"/>
</dbReference>
<dbReference type="PANTHER" id="PTHR10943:SF2">
    <property type="entry name" value="26S PROTEASOME NON-ATPASE REGULATORY SUBUNIT 1"/>
    <property type="match status" value="1"/>
</dbReference>
<dbReference type="Pfam" id="PF13646">
    <property type="entry name" value="HEAT_2"/>
    <property type="match status" value="1"/>
</dbReference>
<dbReference type="Pfam" id="PF01851">
    <property type="entry name" value="PC_rep"/>
    <property type="match status" value="4"/>
</dbReference>
<dbReference type="Pfam" id="PF18004">
    <property type="entry name" value="RPN2_C"/>
    <property type="match status" value="1"/>
</dbReference>
<dbReference type="Pfam" id="PF21505">
    <property type="entry name" value="RPN2_N"/>
    <property type="match status" value="1"/>
</dbReference>
<dbReference type="PIRSF" id="PIRSF015947">
    <property type="entry name" value="26S_Psome_Rpn2"/>
    <property type="match status" value="1"/>
</dbReference>
<dbReference type="SUPFAM" id="SSF48371">
    <property type="entry name" value="ARM repeat"/>
    <property type="match status" value="1"/>
</dbReference>
<sequence length="953" mass="105748">MITSAAGIISLLDEEEPQLKEFALHKLNAVVNDFWAEISESVDKIEVLYEDEGFRSRQFAALVASKVFYHLGAFEESLNYALGAGDLFNVNDNSEYVETIIAKCIDHYTKQCVENADLPEGEKKPIDQRLEGIVNKMFQRCLDDHKYKQAIGIALETRRLDVFEKTILESNDVPGMLAYSLKLCMSLMQNKQFRNKVLRVLVKIYMNLEKPDFINVCQCLIFLDDTQAVSDILEKLVKEDNLLMAYQICFDLYESASQQFLSSVIQNLRTVGTPIASVPGSTNTGTVPGPEKDSDSMETEEKTAGAVAGKTPDASPEPKDQTLKMIKILSGEMAIELHLQFLIRNNNTDLMILKNTKDAVRNSVCHTATVIANSFMHCGTTSDQFLRDNLEWLARATNWAKFTATASLGVIHKGHEKEALQLMATYLPKDTSPGSAYQEGGGLYALGLIHANHGGDIIDYLLNQLKNASNDIVRHGGSLGLGLAAMGTARQDVYDLLKTNLYQDDAVTGEAAGLALGLVMLGSKNTQAIEDMVGYAQETQHEKILRGLAVGIALVMYGRMEEADALIESLCRDKDPILRRSGMYTVAMAYCGSGNNKAIRRLLHVAVSDVNDDVRRAAVESLGFILFRTPEQCPSVVSLLSESYNPHVRYGAAMALGVCCAGTGNKEAINLLEPMTNDPVNYVRQGALIASALIMIQQTEITCPKVNQFRQLYSKVINDKHDDVMAKFGAILAQGILDAGGHNVTISLQSRTGHTHMPSVVGVLVFTQFWFWFPLSHFLSLAYTPTCIIGLNKDLKMPKVQYKSNCKPSTFAYPAPLEVPKEKEKEKVSTAVLSITAKAKKKEKEKEKKEEEKMEVDEAEKKEEKEKKKEPEPNFQLLDNPARVMPAQLKVLSMTETCRYQPFKPLSIGGIIILKDTSEDIEELVEPVAAHGPKIEEEEQEPEPPEPFEYIDD</sequence>